<evidence type="ECO:0000255" key="1">
    <source>
        <dbReference type="HAMAP-Rule" id="MF_00148"/>
    </source>
</evidence>
<protein>
    <recommendedName>
        <fullName evidence="1">Uracil-DNA glycosylase</fullName>
        <shortName evidence="1">UDG</shortName>
        <ecNumber evidence="1">3.2.2.27</ecNumber>
    </recommendedName>
</protein>
<feature type="chain" id="PRO_1000009958" description="Uracil-DNA glycosylase">
    <location>
        <begin position="1"/>
        <end position="217"/>
    </location>
</feature>
<feature type="active site" description="Proton acceptor" evidence="1">
    <location>
        <position position="62"/>
    </location>
</feature>
<reference key="1">
    <citation type="journal article" date="2007" name="PLoS ONE">
        <title>A glimpse of streptococcal toxic shock syndrome from comparative genomics of S. suis 2 Chinese isolates.</title>
        <authorList>
            <person name="Chen C."/>
            <person name="Tang J."/>
            <person name="Dong W."/>
            <person name="Wang C."/>
            <person name="Feng Y."/>
            <person name="Wang J."/>
            <person name="Zheng F."/>
            <person name="Pan X."/>
            <person name="Liu D."/>
            <person name="Li M."/>
            <person name="Song Y."/>
            <person name="Zhu X."/>
            <person name="Sun H."/>
            <person name="Feng T."/>
            <person name="Guo Z."/>
            <person name="Ju A."/>
            <person name="Ge J."/>
            <person name="Dong Y."/>
            <person name="Sun W."/>
            <person name="Jiang Y."/>
            <person name="Wang J."/>
            <person name="Yan J."/>
            <person name="Yang H."/>
            <person name="Wang X."/>
            <person name="Gao G.F."/>
            <person name="Yang R."/>
            <person name="Wang J."/>
            <person name="Yu J."/>
        </authorList>
    </citation>
    <scope>NUCLEOTIDE SEQUENCE [LARGE SCALE GENOMIC DNA]</scope>
    <source>
        <strain>05ZYH33</strain>
    </source>
</reference>
<comment type="function">
    <text evidence="1">Excises uracil residues from the DNA which can arise as a result of misincorporation of dUMP residues by DNA polymerase or due to deamination of cytosine.</text>
</comment>
<comment type="catalytic activity">
    <reaction evidence="1">
        <text>Hydrolyzes single-stranded DNA or mismatched double-stranded DNA and polynucleotides, releasing free uracil.</text>
        <dbReference type="EC" id="3.2.2.27"/>
    </reaction>
</comment>
<comment type="subcellular location">
    <subcellularLocation>
        <location evidence="1">Cytoplasm</location>
    </subcellularLocation>
</comment>
<comment type="similarity">
    <text evidence="1">Belongs to the uracil-DNA glycosylase (UDG) superfamily. UNG family.</text>
</comment>
<name>UNG_STRSY</name>
<sequence>MEHSAWHELIKAQLPEHYFGKINQFLDHVYAGGTIYPPREKVFAAIQTTDLEEVKVVILGQDPYHGPGQAQGLSFSVPNSVPAPPSLQNILKELTDDIGVKQDHDLTAWAEQGVLLLNACLTVPAGQANGHAGQIWEPFTDAVIKVVNSLDQPVVYILWGAYARKKKALITNPKHLVIESAHPSPLSAYRGFFGSKPFSQANAYLTSQGRTGIDWLR</sequence>
<keyword id="KW-0963">Cytoplasm</keyword>
<keyword id="KW-0227">DNA damage</keyword>
<keyword id="KW-0234">DNA repair</keyword>
<keyword id="KW-0378">Hydrolase</keyword>
<proteinExistence type="inferred from homology"/>
<dbReference type="EC" id="3.2.2.27" evidence="1"/>
<dbReference type="EMBL" id="CP000407">
    <property type="protein sequence ID" value="ABP89969.1"/>
    <property type="molecule type" value="Genomic_DNA"/>
</dbReference>
<dbReference type="SMR" id="A4VV30"/>
<dbReference type="STRING" id="391295.SSU05_1003"/>
<dbReference type="KEGG" id="ssu:SSU05_1003"/>
<dbReference type="eggNOG" id="COG0692">
    <property type="taxonomic scope" value="Bacteria"/>
</dbReference>
<dbReference type="HOGENOM" id="CLU_032162_3_1_9"/>
<dbReference type="GO" id="GO:0005737">
    <property type="term" value="C:cytoplasm"/>
    <property type="evidence" value="ECO:0007669"/>
    <property type="project" value="UniProtKB-SubCell"/>
</dbReference>
<dbReference type="GO" id="GO:0004844">
    <property type="term" value="F:uracil DNA N-glycosylase activity"/>
    <property type="evidence" value="ECO:0007669"/>
    <property type="project" value="UniProtKB-UniRule"/>
</dbReference>
<dbReference type="GO" id="GO:0097510">
    <property type="term" value="P:base-excision repair, AP site formation via deaminated base removal"/>
    <property type="evidence" value="ECO:0007669"/>
    <property type="project" value="TreeGrafter"/>
</dbReference>
<dbReference type="CDD" id="cd10027">
    <property type="entry name" value="UDG-F1-like"/>
    <property type="match status" value="1"/>
</dbReference>
<dbReference type="FunFam" id="3.40.470.10:FF:000008">
    <property type="entry name" value="Uracil-DNA glycosylase"/>
    <property type="match status" value="1"/>
</dbReference>
<dbReference type="Gene3D" id="3.40.470.10">
    <property type="entry name" value="Uracil-DNA glycosylase-like domain"/>
    <property type="match status" value="1"/>
</dbReference>
<dbReference type="HAMAP" id="MF_00148">
    <property type="entry name" value="UDG"/>
    <property type="match status" value="1"/>
</dbReference>
<dbReference type="InterPro" id="IPR002043">
    <property type="entry name" value="UDG_fam1"/>
</dbReference>
<dbReference type="InterPro" id="IPR018085">
    <property type="entry name" value="Ura-DNA_Glyclase_AS"/>
</dbReference>
<dbReference type="InterPro" id="IPR005122">
    <property type="entry name" value="Uracil-DNA_glycosylase-like"/>
</dbReference>
<dbReference type="InterPro" id="IPR036895">
    <property type="entry name" value="Uracil-DNA_glycosylase-like_sf"/>
</dbReference>
<dbReference type="NCBIfam" id="NF003588">
    <property type="entry name" value="PRK05254.1-1"/>
    <property type="match status" value="1"/>
</dbReference>
<dbReference type="NCBIfam" id="NF003589">
    <property type="entry name" value="PRK05254.1-2"/>
    <property type="match status" value="1"/>
</dbReference>
<dbReference type="NCBIfam" id="NF003591">
    <property type="entry name" value="PRK05254.1-4"/>
    <property type="match status" value="1"/>
</dbReference>
<dbReference type="NCBIfam" id="NF003592">
    <property type="entry name" value="PRK05254.1-5"/>
    <property type="match status" value="1"/>
</dbReference>
<dbReference type="NCBIfam" id="TIGR00628">
    <property type="entry name" value="ung"/>
    <property type="match status" value="1"/>
</dbReference>
<dbReference type="PANTHER" id="PTHR11264">
    <property type="entry name" value="URACIL-DNA GLYCOSYLASE"/>
    <property type="match status" value="1"/>
</dbReference>
<dbReference type="PANTHER" id="PTHR11264:SF0">
    <property type="entry name" value="URACIL-DNA GLYCOSYLASE"/>
    <property type="match status" value="1"/>
</dbReference>
<dbReference type="Pfam" id="PF03167">
    <property type="entry name" value="UDG"/>
    <property type="match status" value="1"/>
</dbReference>
<dbReference type="SMART" id="SM00986">
    <property type="entry name" value="UDG"/>
    <property type="match status" value="1"/>
</dbReference>
<dbReference type="SMART" id="SM00987">
    <property type="entry name" value="UreE_C"/>
    <property type="match status" value="1"/>
</dbReference>
<dbReference type="SUPFAM" id="SSF52141">
    <property type="entry name" value="Uracil-DNA glycosylase-like"/>
    <property type="match status" value="1"/>
</dbReference>
<dbReference type="PROSITE" id="PS00130">
    <property type="entry name" value="U_DNA_GLYCOSYLASE"/>
    <property type="match status" value="1"/>
</dbReference>
<gene>
    <name evidence="1" type="primary">ung</name>
    <name type="ordered locus">SSU05_1003</name>
</gene>
<organism>
    <name type="scientific">Streptococcus suis (strain 05ZYH33)</name>
    <dbReference type="NCBI Taxonomy" id="391295"/>
    <lineage>
        <taxon>Bacteria</taxon>
        <taxon>Bacillati</taxon>
        <taxon>Bacillota</taxon>
        <taxon>Bacilli</taxon>
        <taxon>Lactobacillales</taxon>
        <taxon>Streptococcaceae</taxon>
        <taxon>Streptococcus</taxon>
    </lineage>
</organism>
<accession>A4VV30</accession>